<comment type="subcellular location">
    <subcellularLocation>
        <location evidence="1">Periplasm</location>
    </subcellularLocation>
</comment>
<comment type="similarity">
    <text evidence="1">Belongs to the UPF0312 family. Type 1 subfamily.</text>
</comment>
<reference key="1">
    <citation type="submission" date="2002-12" db="EMBL/GenBank/DDBJ databases">
        <title>Complete genome sequence of Vibrio vulnificus CMCP6.</title>
        <authorList>
            <person name="Rhee J.H."/>
            <person name="Kim S.Y."/>
            <person name="Chung S.S."/>
            <person name="Kim J.J."/>
            <person name="Moon Y.H."/>
            <person name="Jeong H."/>
            <person name="Choy H.E."/>
        </authorList>
    </citation>
    <scope>NUCLEOTIDE SEQUENCE [LARGE SCALE GENOMIC DNA]</scope>
    <source>
        <strain>CMCP6</strain>
    </source>
</reference>
<feature type="signal peptide" evidence="1">
    <location>
        <begin position="1"/>
        <end position="22"/>
    </location>
</feature>
<feature type="chain" id="PRO_0000036289" description="UPF0312 protein VV2_0231">
    <location>
        <begin position="23"/>
        <end position="189"/>
    </location>
</feature>
<accession>Q8D7C6</accession>
<name>Y4231_VIBVU</name>
<organism>
    <name type="scientific">Vibrio vulnificus (strain CMCP6)</name>
    <dbReference type="NCBI Taxonomy" id="216895"/>
    <lineage>
        <taxon>Bacteria</taxon>
        <taxon>Pseudomonadati</taxon>
        <taxon>Pseudomonadota</taxon>
        <taxon>Gammaproteobacteria</taxon>
        <taxon>Vibrionales</taxon>
        <taxon>Vibrionaceae</taxon>
        <taxon>Vibrio</taxon>
    </lineage>
</organism>
<keyword id="KW-0574">Periplasm</keyword>
<keyword id="KW-0732">Signal</keyword>
<dbReference type="EMBL" id="AE016796">
    <property type="protein sequence ID" value="AAO07200.1"/>
    <property type="molecule type" value="Genomic_DNA"/>
</dbReference>
<dbReference type="RefSeq" id="WP_011081206.1">
    <property type="nucleotide sequence ID" value="NC_004460.2"/>
</dbReference>
<dbReference type="SMR" id="Q8D7C6"/>
<dbReference type="KEGG" id="vvu:VV2_0231"/>
<dbReference type="HOGENOM" id="CLU_071003_1_2_6"/>
<dbReference type="Proteomes" id="UP000002275">
    <property type="component" value="Chromosome 2"/>
</dbReference>
<dbReference type="GO" id="GO:0042597">
    <property type="term" value="C:periplasmic space"/>
    <property type="evidence" value="ECO:0007669"/>
    <property type="project" value="UniProtKB-SubCell"/>
</dbReference>
<dbReference type="Gene3D" id="2.40.128.110">
    <property type="entry name" value="Lipid/polyisoprenoid-binding, YceI-like"/>
    <property type="match status" value="1"/>
</dbReference>
<dbReference type="HAMAP" id="MF_00780">
    <property type="entry name" value="UPF0312"/>
    <property type="match status" value="1"/>
</dbReference>
<dbReference type="InterPro" id="IPR007372">
    <property type="entry name" value="Lipid/polyisoprenoid-bd_YceI"/>
</dbReference>
<dbReference type="InterPro" id="IPR036761">
    <property type="entry name" value="TTHA0802/YceI-like_sf"/>
</dbReference>
<dbReference type="InterPro" id="IPR023480">
    <property type="entry name" value="UPF0312/YceI"/>
</dbReference>
<dbReference type="NCBIfam" id="NF002994">
    <property type="entry name" value="PRK03757.1"/>
    <property type="match status" value="1"/>
</dbReference>
<dbReference type="PANTHER" id="PTHR34406">
    <property type="entry name" value="PROTEIN YCEI"/>
    <property type="match status" value="1"/>
</dbReference>
<dbReference type="PANTHER" id="PTHR34406:SF1">
    <property type="entry name" value="PROTEIN YCEI"/>
    <property type="match status" value="1"/>
</dbReference>
<dbReference type="Pfam" id="PF04264">
    <property type="entry name" value="YceI"/>
    <property type="match status" value="1"/>
</dbReference>
<dbReference type="SMART" id="SM00867">
    <property type="entry name" value="YceI"/>
    <property type="match status" value="1"/>
</dbReference>
<dbReference type="SUPFAM" id="SSF101874">
    <property type="entry name" value="YceI-like"/>
    <property type="match status" value="1"/>
</dbReference>
<sequence>MRKSVIATGLALMMAVPFAANAADYVIDTKGAHASINFKVSHLGYSFIKGRFNTFSGDFSYDQNNIAASKVNVVVDTRSLDSNHAERDKHIRSGDFIDAGKFNTATFTSTKVMDKGDGKLDVMGDLTLHGVTKPITIAAEFVGAGQDPWGGQRAGFIGTTRLELADFNIPVMGTSSYVDMELHVEGIKK</sequence>
<gene>
    <name type="ordered locus">VV2_0231</name>
</gene>
<proteinExistence type="inferred from homology"/>
<evidence type="ECO:0000255" key="1">
    <source>
        <dbReference type="HAMAP-Rule" id="MF_00780"/>
    </source>
</evidence>
<protein>
    <recommendedName>
        <fullName evidence="1">UPF0312 protein VV2_0231</fullName>
    </recommendedName>
</protein>